<dbReference type="EMBL" id="EQ973893">
    <property type="protein sequence ID" value="EEF39954.1"/>
    <property type="status" value="ALT_SEQ"/>
    <property type="molecule type" value="Genomic_DNA"/>
</dbReference>
<dbReference type="RefSeq" id="XP_015576861.1">
    <property type="nucleotide sequence ID" value="XM_015721375.1"/>
</dbReference>
<dbReference type="STRING" id="3988.B9S8Z3"/>
<dbReference type="InParanoid" id="B9S8Z3"/>
<dbReference type="Proteomes" id="UP000008311">
    <property type="component" value="Unassembled WGS sequence"/>
</dbReference>
<dbReference type="GO" id="GO:0005886">
    <property type="term" value="C:plasma membrane"/>
    <property type="evidence" value="ECO:0000318"/>
    <property type="project" value="GO_Central"/>
</dbReference>
<dbReference type="GO" id="GO:0042545">
    <property type="term" value="P:cell wall modification"/>
    <property type="evidence" value="ECO:0000318"/>
    <property type="project" value="GO_Central"/>
</dbReference>
<dbReference type="GO" id="GO:0007043">
    <property type="term" value="P:cell-cell junction assembly"/>
    <property type="evidence" value="ECO:0000318"/>
    <property type="project" value="GO_Central"/>
</dbReference>
<dbReference type="InterPro" id="IPR006459">
    <property type="entry name" value="CASP/CASPL"/>
</dbReference>
<dbReference type="InterPro" id="IPR006702">
    <property type="entry name" value="CASP_dom"/>
</dbReference>
<dbReference type="InterPro" id="IPR044173">
    <property type="entry name" value="CASPL"/>
</dbReference>
<dbReference type="NCBIfam" id="TIGR01569">
    <property type="entry name" value="A_tha_TIGR01569"/>
    <property type="match status" value="1"/>
</dbReference>
<dbReference type="PANTHER" id="PTHR36488:SF12">
    <property type="entry name" value="CASP-LIKE PROTEIN"/>
    <property type="match status" value="1"/>
</dbReference>
<dbReference type="PANTHER" id="PTHR36488">
    <property type="entry name" value="CASP-LIKE PROTEIN 1U1"/>
    <property type="match status" value="1"/>
</dbReference>
<dbReference type="Pfam" id="PF04535">
    <property type="entry name" value="CASP_dom"/>
    <property type="match status" value="1"/>
</dbReference>
<protein>
    <recommendedName>
        <fullName>Casparian strip membrane protein 4</fullName>
        <shortName>RcCASP4</shortName>
    </recommendedName>
</protein>
<name>CASP4_RICCO</name>
<accession>B9S8Z3</accession>
<comment type="function">
    <text evidence="1">Regulates membrane-cell wall junctions and localized cell wall deposition. Required for establishment of the Casparian strip membrane domain (CSD) and the subsequent formation of Casparian strips, a cell wall modification of the root endodermis that determines an apoplastic barrier between the intraorganismal apoplasm and the extraorganismal apoplasm and prevents lateral diffusion (By similarity).</text>
</comment>
<comment type="subunit">
    <text evidence="1">Homodimer and heterodimers.</text>
</comment>
<comment type="subcellular location">
    <subcellularLocation>
        <location evidence="1">Cell membrane</location>
        <topology evidence="1">Multi-pass membrane protein</topology>
    </subcellularLocation>
    <text evidence="1">Very restricted localization following a belt shape within the plasma membrane which coincides with the position of the Casparian strip membrane domain in the root endodermis.</text>
</comment>
<comment type="similarity">
    <text evidence="3">Belongs to the Casparian strip membrane proteins (CASP) family.</text>
</comment>
<comment type="sequence caution" evidence="3">
    <conflict type="erroneous gene model prediction">
        <sequence resource="EMBL-CDS" id="EEF39954"/>
    </conflict>
</comment>
<organism>
    <name type="scientific">Ricinus communis</name>
    <name type="common">Castor bean</name>
    <dbReference type="NCBI Taxonomy" id="3988"/>
    <lineage>
        <taxon>Eukaryota</taxon>
        <taxon>Viridiplantae</taxon>
        <taxon>Streptophyta</taxon>
        <taxon>Embryophyta</taxon>
        <taxon>Tracheophyta</taxon>
        <taxon>Spermatophyta</taxon>
        <taxon>Magnoliopsida</taxon>
        <taxon>eudicotyledons</taxon>
        <taxon>Gunneridae</taxon>
        <taxon>Pentapetalae</taxon>
        <taxon>rosids</taxon>
        <taxon>fabids</taxon>
        <taxon>Malpighiales</taxon>
        <taxon>Euphorbiaceae</taxon>
        <taxon>Acalyphoideae</taxon>
        <taxon>Acalypheae</taxon>
        <taxon>Ricinus</taxon>
    </lineage>
</organism>
<gene>
    <name type="ORF">RCOM_0837390</name>
</gene>
<sequence length="191" mass="20836">MKTGSVEAGEQASEDATPRRGKKLNRGILILDLVLRVFGAICTLGSAVAMGTTSQTLPSSSQFFRFRAKYNDLPMFMFFAIANSIVCAYLVLSLRLSIFHIIRSAGIITRIILVTFDMVMLVLLTCGASAATSIVYLAHKGNASANWLPFCVRFSHFCNRISGSLIGSFFSIIIFMLLVILSAVSQFSICN</sequence>
<evidence type="ECO:0000250" key="1"/>
<evidence type="ECO:0000255" key="2"/>
<evidence type="ECO:0000305" key="3"/>
<feature type="chain" id="PRO_0000391526" description="Casparian strip membrane protein 4">
    <location>
        <begin position="1"/>
        <end position="191"/>
    </location>
</feature>
<feature type="topological domain" description="Cytoplasmic" evidence="2">
    <location>
        <begin position="1"/>
        <end position="27"/>
    </location>
</feature>
<feature type="transmembrane region" description="Helical" evidence="2">
    <location>
        <begin position="28"/>
        <end position="48"/>
    </location>
</feature>
<feature type="topological domain" description="Extracellular" evidence="2">
    <location>
        <begin position="49"/>
        <end position="72"/>
    </location>
</feature>
<feature type="transmembrane region" description="Helical" evidence="2">
    <location>
        <begin position="73"/>
        <end position="93"/>
    </location>
</feature>
<feature type="topological domain" description="Cytoplasmic" evidence="2">
    <location>
        <begin position="94"/>
        <end position="110"/>
    </location>
</feature>
<feature type="transmembrane region" description="Helical" evidence="2">
    <location>
        <begin position="111"/>
        <end position="131"/>
    </location>
</feature>
<feature type="topological domain" description="Extracellular" evidence="2">
    <location>
        <begin position="132"/>
        <end position="160"/>
    </location>
</feature>
<feature type="transmembrane region" description="Helical" evidence="2">
    <location>
        <begin position="161"/>
        <end position="181"/>
    </location>
</feature>
<feature type="topological domain" description="Cytoplasmic" evidence="2">
    <location>
        <begin position="182"/>
        <end position="191"/>
    </location>
</feature>
<feature type="glycosylation site" description="N-linked (GlcNAc...) asparagine" evidence="2">
    <location>
        <position position="142"/>
    </location>
</feature>
<keyword id="KW-1003">Cell membrane</keyword>
<keyword id="KW-0961">Cell wall biogenesis/degradation</keyword>
<keyword id="KW-0325">Glycoprotein</keyword>
<keyword id="KW-0472">Membrane</keyword>
<keyword id="KW-1185">Reference proteome</keyword>
<keyword id="KW-0812">Transmembrane</keyword>
<keyword id="KW-1133">Transmembrane helix</keyword>
<proteinExistence type="evidence at transcript level"/>
<reference key="1">
    <citation type="journal article" date="2010" name="Nat. Biotechnol.">
        <title>Draft genome sequence of the oilseed species Ricinus communis.</title>
        <authorList>
            <person name="Chan A.P."/>
            <person name="Crabtree J."/>
            <person name="Zhao Q."/>
            <person name="Lorenzi H."/>
            <person name="Orvis J."/>
            <person name="Puiu D."/>
            <person name="Melake-Berhan A."/>
            <person name="Jones K.M."/>
            <person name="Redman J."/>
            <person name="Chen G."/>
            <person name="Cahoon E.B."/>
            <person name="Gedil M."/>
            <person name="Stanke M."/>
            <person name="Haas B.J."/>
            <person name="Wortman J.R."/>
            <person name="Fraser-Liggett C.M."/>
            <person name="Ravel J."/>
            <person name="Rabinowicz P.D."/>
        </authorList>
    </citation>
    <scope>NUCLEOTIDE SEQUENCE [LARGE SCALE GENOMIC DNA]</scope>
    <source>
        <strain>cv. Hale</strain>
    </source>
</reference>
<reference key="2">
    <citation type="journal article" date="2014" name="Plant Physiol.">
        <title>Functional and evolutionary analysis of the CASPARIAN STRIP MEMBRANE DOMAIN PROTEIN family.</title>
        <authorList>
            <person name="Roppolo D."/>
            <person name="Boeckmann B."/>
            <person name="Pfister A."/>
            <person name="Boutet E."/>
            <person name="Rubio M.C."/>
            <person name="Denervaud-Tendon V."/>
            <person name="Vermeer J.E."/>
            <person name="Gheyselinck J."/>
            <person name="Xenarios I."/>
            <person name="Geldner N."/>
        </authorList>
    </citation>
    <scope>GENE FAMILY</scope>
    <scope>NOMENCLATURE</scope>
</reference>